<name>Y620_METKA</name>
<organism>
    <name type="scientific">Methanopyrus kandleri (strain AV19 / DSM 6324 / JCM 9639 / NBRC 100938)</name>
    <dbReference type="NCBI Taxonomy" id="190192"/>
    <lineage>
        <taxon>Archaea</taxon>
        <taxon>Methanobacteriati</taxon>
        <taxon>Methanobacteriota</taxon>
        <taxon>Methanomada group</taxon>
        <taxon>Methanopyri</taxon>
        <taxon>Methanopyrales</taxon>
        <taxon>Methanopyraceae</taxon>
        <taxon>Methanopyrus</taxon>
    </lineage>
</organism>
<comment type="cofactor">
    <cofactor evidence="1">
        <name>pyridoxal 5'-phosphate</name>
        <dbReference type="ChEBI" id="CHEBI:597326"/>
    </cofactor>
</comment>
<comment type="caution">
    <text evidence="2">Despite a certain similarity to selA, this is not selA (see AC Q57622).</text>
</comment>
<gene>
    <name type="ordered locus">MK0620</name>
</gene>
<reference key="1">
    <citation type="journal article" date="2002" name="Proc. Natl. Acad. Sci. U.S.A.">
        <title>The complete genome of hyperthermophile Methanopyrus kandleri AV19 and monophyly of archaeal methanogens.</title>
        <authorList>
            <person name="Slesarev A.I."/>
            <person name="Mezhevaya K.V."/>
            <person name="Makarova K.S."/>
            <person name="Polushin N.N."/>
            <person name="Shcherbinina O.V."/>
            <person name="Shakhova V.V."/>
            <person name="Belova G.I."/>
            <person name="Aravind L."/>
            <person name="Natale D.A."/>
            <person name="Rogozin I.B."/>
            <person name="Tatusov R.L."/>
            <person name="Wolf Y.I."/>
            <person name="Stetter K.O."/>
            <person name="Malykh A.G."/>
            <person name="Koonin E.V."/>
            <person name="Kozyavkin S.A."/>
        </authorList>
    </citation>
    <scope>NUCLEOTIDE SEQUENCE [LARGE SCALE GENOMIC DNA]</scope>
    <source>
        <strain>AV19 / DSM 6324 / JCM 9639 / NBRC 100938</strain>
    </source>
</reference>
<proteinExistence type="inferred from homology"/>
<dbReference type="EMBL" id="AE009439">
    <property type="protein sequence ID" value="AAM01835.1"/>
    <property type="molecule type" value="Genomic_DNA"/>
</dbReference>
<dbReference type="SMR" id="Q8TXP1"/>
<dbReference type="FunCoup" id="Q8TXP1">
    <property type="interactions" value="29"/>
</dbReference>
<dbReference type="STRING" id="190192.MK0620"/>
<dbReference type="PaxDb" id="190192-MK0620"/>
<dbReference type="EnsemblBacteria" id="AAM01835">
    <property type="protein sequence ID" value="AAM01835"/>
    <property type="gene ID" value="MK0620"/>
</dbReference>
<dbReference type="KEGG" id="mka:MK0620"/>
<dbReference type="PATRIC" id="fig|190192.8.peg.658"/>
<dbReference type="HOGENOM" id="CLU_055443_0_0_2"/>
<dbReference type="InParanoid" id="Q8TXP1"/>
<dbReference type="Proteomes" id="UP000001826">
    <property type="component" value="Chromosome"/>
</dbReference>
<dbReference type="GO" id="GO:0004125">
    <property type="term" value="F:L-seryl-tRNA(Sec) selenium transferase activity"/>
    <property type="evidence" value="ECO:0007669"/>
    <property type="project" value="TreeGrafter"/>
</dbReference>
<dbReference type="Gene3D" id="3.90.1150.70">
    <property type="match status" value="1"/>
</dbReference>
<dbReference type="Gene3D" id="3.40.640.10">
    <property type="entry name" value="Type I PLP-dependent aspartate aminotransferase-like (Major domain)"/>
    <property type="match status" value="1"/>
</dbReference>
<dbReference type="InterPro" id="IPR020033">
    <property type="entry name" value="PyrdxlP-dep_transferase_arc"/>
</dbReference>
<dbReference type="InterPro" id="IPR015424">
    <property type="entry name" value="PyrdxlP-dep_Trfase"/>
</dbReference>
<dbReference type="InterPro" id="IPR015421">
    <property type="entry name" value="PyrdxlP-dep_Trfase_major"/>
</dbReference>
<dbReference type="InterPro" id="IPR055177">
    <property type="entry name" value="UPF0425_MJ0158-like_C"/>
</dbReference>
<dbReference type="NCBIfam" id="TIGR03576">
    <property type="entry name" value="pyridox_MJ0158"/>
    <property type="match status" value="1"/>
</dbReference>
<dbReference type="PANTHER" id="PTHR32328">
    <property type="entry name" value="L-SERYL-TRNA(SEC) SELENIUM TRANSFERASE"/>
    <property type="match status" value="1"/>
</dbReference>
<dbReference type="PANTHER" id="PTHR32328:SF0">
    <property type="entry name" value="L-SERYL-TRNA(SEC) SELENIUM TRANSFERASE"/>
    <property type="match status" value="1"/>
</dbReference>
<dbReference type="Pfam" id="PF22583">
    <property type="entry name" value="UPF0425_C"/>
    <property type="match status" value="1"/>
</dbReference>
<dbReference type="SUPFAM" id="SSF53383">
    <property type="entry name" value="PLP-dependent transferases"/>
    <property type="match status" value="1"/>
</dbReference>
<feature type="chain" id="PRO_0000285291" description="UPF0425 pyridoxal phosphate-dependent protein MK0620">
    <location>
        <begin position="1"/>
        <end position="346"/>
    </location>
</feature>
<feature type="modified residue" description="N6-(pyridoxal phosphate)lysine" evidence="1">
    <location>
        <position position="206"/>
    </location>
</feature>
<protein>
    <recommendedName>
        <fullName>UPF0425 pyridoxal phosphate-dependent protein MK0620</fullName>
    </recommendedName>
</protein>
<keyword id="KW-0663">Pyridoxal phosphate</keyword>
<keyword id="KW-1185">Reference proteome</keyword>
<accession>Q8TXP1</accession>
<evidence type="ECO:0000250" key="1"/>
<evidence type="ECO:0000305" key="2"/>
<sequence>MRDIGSQPAAGVRSMKVRDRALEIIRERISRGDPLYDFTGLASRPKVDAASDELRTYLSEALILPEIRELCREHFDAPEYEVLVAPRTTAAVIATILALEPRSVLHVLPEDGEAHPCVEEGCRLAGAEYEEVEESEIPDLDGFDLVVVTGCDVRWNVVSEDTLREVASAEAVTLLDDASGDRVRRLHGQKPGPRYGFDLVVTSCDKLMDGPRAGVLIGRDDLVEGVRRVCEGYGWTVDGPTLAAVKRAFEEFELSSLEARLKELERVYERLKDELDVERTGAGLVFHGVEREVEIGLGLLRRYGIMTITALGYERVDRTLRFNLLTEDAERFGYDRFVEVVKGELS</sequence>